<name>ATPF_HALHL</name>
<dbReference type="EMBL" id="CP000544">
    <property type="protein sequence ID" value="ABM63197.1"/>
    <property type="status" value="ALT_INIT"/>
    <property type="molecule type" value="Genomic_DNA"/>
</dbReference>
<dbReference type="RefSeq" id="WP_081432236.1">
    <property type="nucleotide sequence ID" value="NC_008789.1"/>
</dbReference>
<dbReference type="SMR" id="A1WZT5"/>
<dbReference type="STRING" id="349124.Hhal_2434"/>
<dbReference type="KEGG" id="hha:Hhal_2434"/>
<dbReference type="eggNOG" id="COG0711">
    <property type="taxonomic scope" value="Bacteria"/>
</dbReference>
<dbReference type="HOGENOM" id="CLU_079215_4_5_6"/>
<dbReference type="OrthoDB" id="9788020at2"/>
<dbReference type="Proteomes" id="UP000000647">
    <property type="component" value="Chromosome"/>
</dbReference>
<dbReference type="GO" id="GO:0005886">
    <property type="term" value="C:plasma membrane"/>
    <property type="evidence" value="ECO:0007669"/>
    <property type="project" value="UniProtKB-SubCell"/>
</dbReference>
<dbReference type="GO" id="GO:0045259">
    <property type="term" value="C:proton-transporting ATP synthase complex"/>
    <property type="evidence" value="ECO:0007669"/>
    <property type="project" value="UniProtKB-KW"/>
</dbReference>
<dbReference type="GO" id="GO:0046933">
    <property type="term" value="F:proton-transporting ATP synthase activity, rotational mechanism"/>
    <property type="evidence" value="ECO:0007669"/>
    <property type="project" value="UniProtKB-UniRule"/>
</dbReference>
<dbReference type="GO" id="GO:0046961">
    <property type="term" value="F:proton-transporting ATPase activity, rotational mechanism"/>
    <property type="evidence" value="ECO:0007669"/>
    <property type="project" value="TreeGrafter"/>
</dbReference>
<dbReference type="CDD" id="cd06503">
    <property type="entry name" value="ATP-synt_Fo_b"/>
    <property type="match status" value="1"/>
</dbReference>
<dbReference type="FunFam" id="1.20.5.620:FF:000001">
    <property type="entry name" value="ATP synthase subunit b"/>
    <property type="match status" value="1"/>
</dbReference>
<dbReference type="Gene3D" id="1.20.5.620">
    <property type="entry name" value="F1F0 ATP synthase subunit B, membrane domain"/>
    <property type="match status" value="1"/>
</dbReference>
<dbReference type="HAMAP" id="MF_01398">
    <property type="entry name" value="ATP_synth_b_bprime"/>
    <property type="match status" value="1"/>
</dbReference>
<dbReference type="InterPro" id="IPR028987">
    <property type="entry name" value="ATP_synth_B-like_membr_sf"/>
</dbReference>
<dbReference type="InterPro" id="IPR002146">
    <property type="entry name" value="ATP_synth_b/b'su_bac/chlpt"/>
</dbReference>
<dbReference type="InterPro" id="IPR005864">
    <property type="entry name" value="ATP_synth_F0_bsu_bac"/>
</dbReference>
<dbReference type="InterPro" id="IPR050059">
    <property type="entry name" value="ATP_synthase_B_chain"/>
</dbReference>
<dbReference type="NCBIfam" id="TIGR01144">
    <property type="entry name" value="ATP_synt_b"/>
    <property type="match status" value="1"/>
</dbReference>
<dbReference type="NCBIfam" id="NF004411">
    <property type="entry name" value="PRK05759.1-2"/>
    <property type="match status" value="1"/>
</dbReference>
<dbReference type="PANTHER" id="PTHR33445:SF1">
    <property type="entry name" value="ATP SYNTHASE SUBUNIT B"/>
    <property type="match status" value="1"/>
</dbReference>
<dbReference type="PANTHER" id="PTHR33445">
    <property type="entry name" value="ATP SYNTHASE SUBUNIT B', CHLOROPLASTIC"/>
    <property type="match status" value="1"/>
</dbReference>
<dbReference type="Pfam" id="PF00430">
    <property type="entry name" value="ATP-synt_B"/>
    <property type="match status" value="1"/>
</dbReference>
<dbReference type="SUPFAM" id="SSF81573">
    <property type="entry name" value="F1F0 ATP synthase subunit B, membrane domain"/>
    <property type="match status" value="1"/>
</dbReference>
<organism>
    <name type="scientific">Halorhodospira halophila (strain DSM 244 / SL1)</name>
    <name type="common">Ectothiorhodospira halophila (strain DSM 244 / SL1)</name>
    <dbReference type="NCBI Taxonomy" id="349124"/>
    <lineage>
        <taxon>Bacteria</taxon>
        <taxon>Pseudomonadati</taxon>
        <taxon>Pseudomonadota</taxon>
        <taxon>Gammaproteobacteria</taxon>
        <taxon>Chromatiales</taxon>
        <taxon>Ectothiorhodospiraceae</taxon>
        <taxon>Halorhodospira</taxon>
    </lineage>
</organism>
<reference key="1">
    <citation type="submission" date="2006-12" db="EMBL/GenBank/DDBJ databases">
        <title>Complete sequence of Halorhodospira halophila SL1.</title>
        <authorList>
            <consortium name="US DOE Joint Genome Institute"/>
            <person name="Copeland A."/>
            <person name="Lucas S."/>
            <person name="Lapidus A."/>
            <person name="Barry K."/>
            <person name="Detter J.C."/>
            <person name="Glavina del Rio T."/>
            <person name="Hammon N."/>
            <person name="Israni S."/>
            <person name="Dalin E."/>
            <person name="Tice H."/>
            <person name="Pitluck S."/>
            <person name="Saunders E."/>
            <person name="Brettin T."/>
            <person name="Bruce D."/>
            <person name="Han C."/>
            <person name="Tapia R."/>
            <person name="Schmutz J."/>
            <person name="Larimer F."/>
            <person name="Land M."/>
            <person name="Hauser L."/>
            <person name="Kyrpides N."/>
            <person name="Mikhailova N."/>
            <person name="Hoff W."/>
            <person name="Richardson P."/>
        </authorList>
    </citation>
    <scope>NUCLEOTIDE SEQUENCE [LARGE SCALE GENOMIC DNA]</scope>
    <source>
        <strain>DSM 244 / SL1</strain>
    </source>
</reference>
<proteinExistence type="inferred from homology"/>
<protein>
    <recommendedName>
        <fullName evidence="1">ATP synthase subunit b</fullName>
    </recommendedName>
    <alternativeName>
        <fullName evidence="1">ATP synthase F(0) sector subunit b</fullName>
    </alternativeName>
    <alternativeName>
        <fullName evidence="1">ATPase subunit I</fullName>
    </alternativeName>
    <alternativeName>
        <fullName evidence="1">F-type ATPase subunit b</fullName>
        <shortName evidence="1">F-ATPase subunit b</shortName>
    </alternativeName>
</protein>
<gene>
    <name evidence="1" type="primary">atpF</name>
    <name type="ordered locus">Hhal_2434</name>
</gene>
<evidence type="ECO:0000255" key="1">
    <source>
        <dbReference type="HAMAP-Rule" id="MF_01398"/>
    </source>
</evidence>
<evidence type="ECO:0000305" key="2"/>
<sequence>MNFGATFWGPMISFALFVWFTMKFVWPPIQQALADRQKQIADGLAAGERGKEELDKAQAEVEAMLRDAREQASQIINQANKRQAEMIEEARAEARSEADRILASAREEIDQEIQRAREDLRKQVSTIAVQASSQILKREVDAKAHKDLIDELATQI</sequence>
<keyword id="KW-0066">ATP synthesis</keyword>
<keyword id="KW-0997">Cell inner membrane</keyword>
<keyword id="KW-1003">Cell membrane</keyword>
<keyword id="KW-0138">CF(0)</keyword>
<keyword id="KW-0375">Hydrogen ion transport</keyword>
<keyword id="KW-0406">Ion transport</keyword>
<keyword id="KW-0472">Membrane</keyword>
<keyword id="KW-1185">Reference proteome</keyword>
<keyword id="KW-0812">Transmembrane</keyword>
<keyword id="KW-1133">Transmembrane helix</keyword>
<keyword id="KW-0813">Transport</keyword>
<accession>A1WZT5</accession>
<comment type="function">
    <text evidence="1">F(1)F(0) ATP synthase produces ATP from ADP in the presence of a proton or sodium gradient. F-type ATPases consist of two structural domains, F(1) containing the extramembraneous catalytic core and F(0) containing the membrane proton channel, linked together by a central stalk and a peripheral stalk. During catalysis, ATP synthesis in the catalytic domain of F(1) is coupled via a rotary mechanism of the central stalk subunits to proton translocation.</text>
</comment>
<comment type="function">
    <text evidence="1">Component of the F(0) channel, it forms part of the peripheral stalk, linking F(1) to F(0).</text>
</comment>
<comment type="subunit">
    <text evidence="1">F-type ATPases have 2 components, F(1) - the catalytic core - and F(0) - the membrane proton channel. F(1) has five subunits: alpha(3), beta(3), gamma(1), delta(1), epsilon(1). F(0) has three main subunits: a(1), b(2) and c(10-14). The alpha and beta chains form an alternating ring which encloses part of the gamma chain. F(1) is attached to F(0) by a central stalk formed by the gamma and epsilon chains, while a peripheral stalk is formed by the delta and b chains.</text>
</comment>
<comment type="subcellular location">
    <subcellularLocation>
        <location evidence="1">Cell inner membrane</location>
        <topology evidence="1">Single-pass membrane protein</topology>
    </subcellularLocation>
</comment>
<comment type="similarity">
    <text evidence="1">Belongs to the ATPase B chain family.</text>
</comment>
<comment type="sequence caution" evidence="2">
    <conflict type="erroneous initiation">
        <sequence resource="EMBL-CDS" id="ABM63197"/>
    </conflict>
</comment>
<feature type="chain" id="PRO_0000368518" description="ATP synthase subunit b">
    <location>
        <begin position="1"/>
        <end position="156"/>
    </location>
</feature>
<feature type="transmembrane region" description="Helical" evidence="1">
    <location>
        <begin position="4"/>
        <end position="26"/>
    </location>
</feature>